<organism>
    <name type="scientific">Shewanella amazonensis (strain ATCC BAA-1098 / SB2B)</name>
    <dbReference type="NCBI Taxonomy" id="326297"/>
    <lineage>
        <taxon>Bacteria</taxon>
        <taxon>Pseudomonadati</taxon>
        <taxon>Pseudomonadota</taxon>
        <taxon>Gammaproteobacteria</taxon>
        <taxon>Alteromonadales</taxon>
        <taxon>Shewanellaceae</taxon>
        <taxon>Shewanella</taxon>
    </lineage>
</organism>
<protein>
    <recommendedName>
        <fullName evidence="1">Chaperone protein HtpG</fullName>
    </recommendedName>
    <alternativeName>
        <fullName evidence="1">Heat shock protein HtpG</fullName>
    </alternativeName>
    <alternativeName>
        <fullName evidence="1">High temperature protein G</fullName>
    </alternativeName>
</protein>
<comment type="function">
    <text evidence="1">Molecular chaperone. Has ATPase activity.</text>
</comment>
<comment type="subunit">
    <text evidence="1">Homodimer.</text>
</comment>
<comment type="subcellular location">
    <subcellularLocation>
        <location evidence="1">Cytoplasm</location>
    </subcellularLocation>
</comment>
<comment type="similarity">
    <text evidence="1">Belongs to the heat shock protein 90 family.</text>
</comment>
<name>HTPG_SHEAM</name>
<feature type="chain" id="PRO_1000014950" description="Chaperone protein HtpG">
    <location>
        <begin position="1"/>
        <end position="637"/>
    </location>
</feature>
<feature type="region of interest" description="A; substrate-binding" evidence="1">
    <location>
        <begin position="1"/>
        <end position="345"/>
    </location>
</feature>
<feature type="region of interest" description="B" evidence="1">
    <location>
        <begin position="346"/>
        <end position="562"/>
    </location>
</feature>
<feature type="region of interest" description="C" evidence="1">
    <location>
        <begin position="563"/>
        <end position="637"/>
    </location>
</feature>
<reference key="1">
    <citation type="submission" date="2006-12" db="EMBL/GenBank/DDBJ databases">
        <title>Complete sequence of Shewanella amazonensis SB2B.</title>
        <authorList>
            <consortium name="US DOE Joint Genome Institute"/>
            <person name="Copeland A."/>
            <person name="Lucas S."/>
            <person name="Lapidus A."/>
            <person name="Barry K."/>
            <person name="Detter J.C."/>
            <person name="Glavina del Rio T."/>
            <person name="Hammon N."/>
            <person name="Israni S."/>
            <person name="Dalin E."/>
            <person name="Tice H."/>
            <person name="Pitluck S."/>
            <person name="Munk A.C."/>
            <person name="Brettin T."/>
            <person name="Bruce D."/>
            <person name="Han C."/>
            <person name="Tapia R."/>
            <person name="Gilna P."/>
            <person name="Schmutz J."/>
            <person name="Larimer F."/>
            <person name="Land M."/>
            <person name="Hauser L."/>
            <person name="Kyrpides N."/>
            <person name="Mikhailova N."/>
            <person name="Fredrickson J."/>
            <person name="Richardson P."/>
        </authorList>
    </citation>
    <scope>NUCLEOTIDE SEQUENCE [LARGE SCALE GENOMIC DNA]</scope>
    <source>
        <strain>ATCC BAA-1098 / SB2B</strain>
    </source>
</reference>
<accession>A1S564</accession>
<proteinExistence type="inferred from homology"/>
<dbReference type="EMBL" id="CP000507">
    <property type="protein sequence ID" value="ABL99520.1"/>
    <property type="molecule type" value="Genomic_DNA"/>
</dbReference>
<dbReference type="RefSeq" id="WP_011759429.1">
    <property type="nucleotide sequence ID" value="NC_008700.1"/>
</dbReference>
<dbReference type="SMR" id="A1S564"/>
<dbReference type="STRING" id="326297.Sama_1313"/>
<dbReference type="KEGG" id="saz:Sama_1313"/>
<dbReference type="eggNOG" id="COG0326">
    <property type="taxonomic scope" value="Bacteria"/>
</dbReference>
<dbReference type="HOGENOM" id="CLU_006684_3_0_6"/>
<dbReference type="OrthoDB" id="9802640at2"/>
<dbReference type="Proteomes" id="UP000009175">
    <property type="component" value="Chromosome"/>
</dbReference>
<dbReference type="GO" id="GO:0005737">
    <property type="term" value="C:cytoplasm"/>
    <property type="evidence" value="ECO:0007669"/>
    <property type="project" value="UniProtKB-SubCell"/>
</dbReference>
<dbReference type="GO" id="GO:0005524">
    <property type="term" value="F:ATP binding"/>
    <property type="evidence" value="ECO:0007669"/>
    <property type="project" value="UniProtKB-UniRule"/>
</dbReference>
<dbReference type="GO" id="GO:0016887">
    <property type="term" value="F:ATP hydrolysis activity"/>
    <property type="evidence" value="ECO:0007669"/>
    <property type="project" value="InterPro"/>
</dbReference>
<dbReference type="GO" id="GO:0140662">
    <property type="term" value="F:ATP-dependent protein folding chaperone"/>
    <property type="evidence" value="ECO:0007669"/>
    <property type="project" value="InterPro"/>
</dbReference>
<dbReference type="GO" id="GO:0051082">
    <property type="term" value="F:unfolded protein binding"/>
    <property type="evidence" value="ECO:0007669"/>
    <property type="project" value="UniProtKB-UniRule"/>
</dbReference>
<dbReference type="CDD" id="cd16927">
    <property type="entry name" value="HATPase_Hsp90-like"/>
    <property type="match status" value="1"/>
</dbReference>
<dbReference type="FunFam" id="3.30.230.80:FF:000002">
    <property type="entry name" value="Molecular chaperone HtpG"/>
    <property type="match status" value="1"/>
</dbReference>
<dbReference type="FunFam" id="3.30.565.10:FF:000009">
    <property type="entry name" value="Molecular chaperone HtpG"/>
    <property type="match status" value="1"/>
</dbReference>
<dbReference type="Gene3D" id="3.30.230.80">
    <property type="match status" value="1"/>
</dbReference>
<dbReference type="Gene3D" id="3.40.50.11260">
    <property type="match status" value="1"/>
</dbReference>
<dbReference type="Gene3D" id="1.20.120.790">
    <property type="entry name" value="Heat shock protein 90, C-terminal domain"/>
    <property type="match status" value="1"/>
</dbReference>
<dbReference type="Gene3D" id="3.30.565.10">
    <property type="entry name" value="Histidine kinase-like ATPase, C-terminal domain"/>
    <property type="match status" value="1"/>
</dbReference>
<dbReference type="HAMAP" id="MF_00505">
    <property type="entry name" value="HSP90"/>
    <property type="match status" value="1"/>
</dbReference>
<dbReference type="InterPro" id="IPR036890">
    <property type="entry name" value="HATPase_C_sf"/>
</dbReference>
<dbReference type="InterPro" id="IPR019805">
    <property type="entry name" value="Heat_shock_protein_90_CS"/>
</dbReference>
<dbReference type="InterPro" id="IPR037196">
    <property type="entry name" value="HSP90_C"/>
</dbReference>
<dbReference type="InterPro" id="IPR001404">
    <property type="entry name" value="Hsp90_fam"/>
</dbReference>
<dbReference type="InterPro" id="IPR020575">
    <property type="entry name" value="Hsp90_N"/>
</dbReference>
<dbReference type="InterPro" id="IPR020568">
    <property type="entry name" value="Ribosomal_Su5_D2-typ_SF"/>
</dbReference>
<dbReference type="NCBIfam" id="NF003555">
    <property type="entry name" value="PRK05218.1"/>
    <property type="match status" value="1"/>
</dbReference>
<dbReference type="PANTHER" id="PTHR11528">
    <property type="entry name" value="HEAT SHOCK PROTEIN 90 FAMILY MEMBER"/>
    <property type="match status" value="1"/>
</dbReference>
<dbReference type="Pfam" id="PF13589">
    <property type="entry name" value="HATPase_c_3"/>
    <property type="match status" value="1"/>
</dbReference>
<dbReference type="Pfam" id="PF00183">
    <property type="entry name" value="HSP90"/>
    <property type="match status" value="1"/>
</dbReference>
<dbReference type="PIRSF" id="PIRSF002583">
    <property type="entry name" value="Hsp90"/>
    <property type="match status" value="1"/>
</dbReference>
<dbReference type="PRINTS" id="PR00775">
    <property type="entry name" value="HEATSHOCK90"/>
</dbReference>
<dbReference type="SMART" id="SM00387">
    <property type="entry name" value="HATPase_c"/>
    <property type="match status" value="1"/>
</dbReference>
<dbReference type="SUPFAM" id="SSF55874">
    <property type="entry name" value="ATPase domain of HSP90 chaperone/DNA topoisomerase II/histidine kinase"/>
    <property type="match status" value="1"/>
</dbReference>
<dbReference type="SUPFAM" id="SSF110942">
    <property type="entry name" value="HSP90 C-terminal domain"/>
    <property type="match status" value="1"/>
</dbReference>
<dbReference type="SUPFAM" id="SSF54211">
    <property type="entry name" value="Ribosomal protein S5 domain 2-like"/>
    <property type="match status" value="1"/>
</dbReference>
<dbReference type="PROSITE" id="PS00298">
    <property type="entry name" value="HSP90"/>
    <property type="match status" value="1"/>
</dbReference>
<sequence>MSHQETHGFQTEVKQLLHLMIHSLYSNKEIFLRELVSNAADAADKLRYLALTNDSLYEGDGELRVRVSADKDKGTVTIEDNGIGMTRDGVIEHLGTIAKSGTAEFFKNLSGDSAKDSQLIGQFGVGFYSAFIVAKRVEVFTRAAGHSADEGVKWESEGEGNFSVETITKAERGTKIVLHLRDEEKEFADDWRLRSIITKYSDHISIPVEMYQEGTPERDGPDGEKIPATEGQWKAMNKATALWTRSKSDVSDEEYKEFYKHISHDFADPLDWSHNKVEGNQEYTSLLYIPAKAPWDLWNRDRKHGLKLFVQRVFIMDDAEQFMPSYLRFVQGLIDSNDLPLNVSREILQDNKVTRNLRQALTKRVLSMLEKLAKDDADKYQQFWAEFGTVLKEGPAEDFANRERIAGLLRFASTHTGDATPSVSLDDYIGRMKEGQEKIYYIVADSHEAAANSPHLELLKKKGIEVLLLSERIDEWLINHLHDYKEKALHSVTRGDLDLGALEDEAEKAAQEKLAQESEPLVERFKSALGDKVSDVKITTRLTDTPACVVTGEGEMSSQMIKLMQAAGQPVPESKPTLELNPTHPLVARLDKEQDETAFAEWAEMLLAQATLSERGSLADPSAFIKLVNQMLLKSVG</sequence>
<keyword id="KW-0067">ATP-binding</keyword>
<keyword id="KW-0143">Chaperone</keyword>
<keyword id="KW-0963">Cytoplasm</keyword>
<keyword id="KW-0547">Nucleotide-binding</keyword>
<keyword id="KW-1185">Reference proteome</keyword>
<keyword id="KW-0346">Stress response</keyword>
<gene>
    <name evidence="1" type="primary">htpG</name>
    <name type="ordered locus">Sama_1313</name>
</gene>
<evidence type="ECO:0000255" key="1">
    <source>
        <dbReference type="HAMAP-Rule" id="MF_00505"/>
    </source>
</evidence>